<dbReference type="EC" id="7.2.2.8"/>
<dbReference type="EMBL" id="BA000017">
    <property type="protein sequence ID" value="BAB58719.1"/>
    <property type="molecule type" value="Genomic_DNA"/>
</dbReference>
<dbReference type="RefSeq" id="WP_000024139.1">
    <property type="nucleotide sequence ID" value="NC_002758.2"/>
</dbReference>
<dbReference type="SMR" id="Q99R80"/>
<dbReference type="KEGG" id="sav:SAV2557"/>
<dbReference type="HOGENOM" id="CLU_001771_0_3_9"/>
<dbReference type="PhylomeDB" id="Q99R80"/>
<dbReference type="Proteomes" id="UP000002481">
    <property type="component" value="Chromosome"/>
</dbReference>
<dbReference type="GO" id="GO:0005886">
    <property type="term" value="C:plasma membrane"/>
    <property type="evidence" value="ECO:0007669"/>
    <property type="project" value="UniProtKB-SubCell"/>
</dbReference>
<dbReference type="GO" id="GO:0005524">
    <property type="term" value="F:ATP binding"/>
    <property type="evidence" value="ECO:0007669"/>
    <property type="project" value="UniProtKB-KW"/>
</dbReference>
<dbReference type="GO" id="GO:0016887">
    <property type="term" value="F:ATP hydrolysis activity"/>
    <property type="evidence" value="ECO:0007669"/>
    <property type="project" value="InterPro"/>
</dbReference>
<dbReference type="GO" id="GO:0005507">
    <property type="term" value="F:copper ion binding"/>
    <property type="evidence" value="ECO:0007669"/>
    <property type="project" value="InterPro"/>
</dbReference>
<dbReference type="GO" id="GO:0043682">
    <property type="term" value="F:P-type divalent copper transporter activity"/>
    <property type="evidence" value="ECO:0007669"/>
    <property type="project" value="TreeGrafter"/>
</dbReference>
<dbReference type="GO" id="GO:0140581">
    <property type="term" value="F:P-type monovalent copper transporter activity"/>
    <property type="evidence" value="ECO:0007669"/>
    <property type="project" value="UniProtKB-EC"/>
</dbReference>
<dbReference type="GO" id="GO:0055070">
    <property type="term" value="P:copper ion homeostasis"/>
    <property type="evidence" value="ECO:0007669"/>
    <property type="project" value="TreeGrafter"/>
</dbReference>
<dbReference type="CDD" id="cd00371">
    <property type="entry name" value="HMA"/>
    <property type="match status" value="2"/>
</dbReference>
<dbReference type="CDD" id="cd02094">
    <property type="entry name" value="P-type_ATPase_Cu-like"/>
    <property type="match status" value="1"/>
</dbReference>
<dbReference type="FunFam" id="3.40.1110.10:FF:000038">
    <property type="entry name" value="Copper-exporting P-type ATPase"/>
    <property type="match status" value="1"/>
</dbReference>
<dbReference type="FunFam" id="3.40.1110.10:FF:000049">
    <property type="entry name" value="Copper-exporting P-type ATPase"/>
    <property type="match status" value="1"/>
</dbReference>
<dbReference type="FunFam" id="2.70.150.10:FF:000020">
    <property type="entry name" value="Copper-exporting P-type ATPase A"/>
    <property type="match status" value="1"/>
</dbReference>
<dbReference type="FunFam" id="3.30.70.100:FF:000005">
    <property type="entry name" value="Copper-exporting P-type ATPase A"/>
    <property type="match status" value="2"/>
</dbReference>
<dbReference type="FunFam" id="3.40.50.1000:FF:000144">
    <property type="entry name" value="copper-transporting ATPase 1 isoform X2"/>
    <property type="match status" value="1"/>
</dbReference>
<dbReference type="Gene3D" id="3.30.70.100">
    <property type="match status" value="2"/>
</dbReference>
<dbReference type="Gene3D" id="3.40.1110.10">
    <property type="entry name" value="Calcium-transporting ATPase, cytoplasmic domain N"/>
    <property type="match status" value="2"/>
</dbReference>
<dbReference type="Gene3D" id="2.70.150.10">
    <property type="entry name" value="Calcium-transporting ATPase, cytoplasmic transduction domain A"/>
    <property type="match status" value="1"/>
</dbReference>
<dbReference type="Gene3D" id="3.40.50.1000">
    <property type="entry name" value="HAD superfamily/HAD-like"/>
    <property type="match status" value="1"/>
</dbReference>
<dbReference type="InterPro" id="IPR023299">
    <property type="entry name" value="ATPase_P-typ_cyto_dom_N"/>
</dbReference>
<dbReference type="InterPro" id="IPR018303">
    <property type="entry name" value="ATPase_P-typ_P_site"/>
</dbReference>
<dbReference type="InterPro" id="IPR023298">
    <property type="entry name" value="ATPase_P-typ_TM_dom_sf"/>
</dbReference>
<dbReference type="InterPro" id="IPR008250">
    <property type="entry name" value="ATPase_P-typ_transduc_dom_A_sf"/>
</dbReference>
<dbReference type="InterPro" id="IPR036412">
    <property type="entry name" value="HAD-like_sf"/>
</dbReference>
<dbReference type="InterPro" id="IPR023214">
    <property type="entry name" value="HAD_sf"/>
</dbReference>
<dbReference type="InterPro" id="IPR017969">
    <property type="entry name" value="Heavy-metal-associated_CS"/>
</dbReference>
<dbReference type="InterPro" id="IPR006122">
    <property type="entry name" value="HMA_Cu_ion-bd"/>
</dbReference>
<dbReference type="InterPro" id="IPR006121">
    <property type="entry name" value="HMA_dom"/>
</dbReference>
<dbReference type="InterPro" id="IPR036163">
    <property type="entry name" value="HMA_dom_sf"/>
</dbReference>
<dbReference type="InterPro" id="IPR027256">
    <property type="entry name" value="P-typ_ATPase_IB"/>
</dbReference>
<dbReference type="InterPro" id="IPR001757">
    <property type="entry name" value="P_typ_ATPase"/>
</dbReference>
<dbReference type="InterPro" id="IPR044492">
    <property type="entry name" value="P_typ_ATPase_HD_dom"/>
</dbReference>
<dbReference type="NCBIfam" id="TIGR01511">
    <property type="entry name" value="ATPase-IB1_Cu"/>
    <property type="match status" value="1"/>
</dbReference>
<dbReference type="NCBIfam" id="TIGR01525">
    <property type="entry name" value="ATPase-IB_hvy"/>
    <property type="match status" value="1"/>
</dbReference>
<dbReference type="NCBIfam" id="TIGR01494">
    <property type="entry name" value="ATPase_P-type"/>
    <property type="match status" value="1"/>
</dbReference>
<dbReference type="NCBIfam" id="TIGR00003">
    <property type="entry name" value="copper ion binding protein"/>
    <property type="match status" value="2"/>
</dbReference>
<dbReference type="PANTHER" id="PTHR43520">
    <property type="entry name" value="ATP7, ISOFORM B"/>
    <property type="match status" value="1"/>
</dbReference>
<dbReference type="PANTHER" id="PTHR43520:SF8">
    <property type="entry name" value="P-TYPE CU(+) TRANSPORTER"/>
    <property type="match status" value="1"/>
</dbReference>
<dbReference type="Pfam" id="PF00122">
    <property type="entry name" value="E1-E2_ATPase"/>
    <property type="match status" value="1"/>
</dbReference>
<dbReference type="Pfam" id="PF00403">
    <property type="entry name" value="HMA"/>
    <property type="match status" value="2"/>
</dbReference>
<dbReference type="Pfam" id="PF00702">
    <property type="entry name" value="Hydrolase"/>
    <property type="match status" value="1"/>
</dbReference>
<dbReference type="PRINTS" id="PR00119">
    <property type="entry name" value="CATATPASE"/>
</dbReference>
<dbReference type="PRINTS" id="PR00943">
    <property type="entry name" value="CUATPASE"/>
</dbReference>
<dbReference type="SFLD" id="SFLDS00003">
    <property type="entry name" value="Haloacid_Dehalogenase"/>
    <property type="match status" value="1"/>
</dbReference>
<dbReference type="SFLD" id="SFLDF00027">
    <property type="entry name" value="p-type_atpase"/>
    <property type="match status" value="1"/>
</dbReference>
<dbReference type="SUPFAM" id="SSF81653">
    <property type="entry name" value="Calcium ATPase, transduction domain A"/>
    <property type="match status" value="1"/>
</dbReference>
<dbReference type="SUPFAM" id="SSF81665">
    <property type="entry name" value="Calcium ATPase, transmembrane domain M"/>
    <property type="match status" value="1"/>
</dbReference>
<dbReference type="SUPFAM" id="SSF56784">
    <property type="entry name" value="HAD-like"/>
    <property type="match status" value="1"/>
</dbReference>
<dbReference type="SUPFAM" id="SSF55008">
    <property type="entry name" value="HMA, heavy metal-associated domain"/>
    <property type="match status" value="2"/>
</dbReference>
<dbReference type="PROSITE" id="PS00154">
    <property type="entry name" value="ATPASE_E1_E2"/>
    <property type="match status" value="1"/>
</dbReference>
<dbReference type="PROSITE" id="PS01047">
    <property type="entry name" value="HMA_1"/>
    <property type="match status" value="2"/>
</dbReference>
<dbReference type="PROSITE" id="PS50846">
    <property type="entry name" value="HMA_2"/>
    <property type="match status" value="2"/>
</dbReference>
<keyword id="KW-0067">ATP-binding</keyword>
<keyword id="KW-1003">Cell membrane</keyword>
<keyword id="KW-0186">Copper</keyword>
<keyword id="KW-0187">Copper transport</keyword>
<keyword id="KW-0406">Ion transport</keyword>
<keyword id="KW-0460">Magnesium</keyword>
<keyword id="KW-0472">Membrane</keyword>
<keyword id="KW-0479">Metal-binding</keyword>
<keyword id="KW-0547">Nucleotide-binding</keyword>
<keyword id="KW-0597">Phosphoprotein</keyword>
<keyword id="KW-0677">Repeat</keyword>
<keyword id="KW-1278">Translocase</keyword>
<keyword id="KW-0812">Transmembrane</keyword>
<keyword id="KW-1133">Transmembrane helix</keyword>
<keyword id="KW-0813">Transport</keyword>
<reference key="1">
    <citation type="journal article" date="2001" name="Lancet">
        <title>Whole genome sequencing of meticillin-resistant Staphylococcus aureus.</title>
        <authorList>
            <person name="Kuroda M."/>
            <person name="Ohta T."/>
            <person name="Uchiyama I."/>
            <person name="Baba T."/>
            <person name="Yuzawa H."/>
            <person name="Kobayashi I."/>
            <person name="Cui L."/>
            <person name="Oguchi A."/>
            <person name="Aoki K."/>
            <person name="Nagai Y."/>
            <person name="Lian J.-Q."/>
            <person name="Ito T."/>
            <person name="Kanamori M."/>
            <person name="Matsumaru H."/>
            <person name="Maruyama A."/>
            <person name="Murakami H."/>
            <person name="Hosoyama A."/>
            <person name="Mizutani-Ui Y."/>
            <person name="Takahashi N.K."/>
            <person name="Sawano T."/>
            <person name="Inoue R."/>
            <person name="Kaito C."/>
            <person name="Sekimizu K."/>
            <person name="Hirakawa H."/>
            <person name="Kuhara S."/>
            <person name="Goto S."/>
            <person name="Yabuzaki J."/>
            <person name="Kanehisa M."/>
            <person name="Yamashita A."/>
            <person name="Oshima K."/>
            <person name="Furuya K."/>
            <person name="Yoshino C."/>
            <person name="Shiba T."/>
            <person name="Hattori M."/>
            <person name="Ogasawara N."/>
            <person name="Hayashi H."/>
            <person name="Hiramatsu K."/>
        </authorList>
    </citation>
    <scope>NUCLEOTIDE SEQUENCE [LARGE SCALE GENOMIC DNA]</scope>
    <source>
        <strain>Mu50 / ATCC 700699</strain>
    </source>
</reference>
<accession>Q99R80</accession>
<sequence>MANTKKTTLDITGMTCAACSNRIEKKLNKLDDVNAQVNLTTEKATVEYNPDQHDVQEFINTIQHLGYGVTVETVELDITGMTCAACSSRIEKVLNKMNGVQNATVNLTTEQAKVDYYPEETDADKLVTRIQKLGYDASIKDNNKDQTSRKAEALQHKLIKLIISAVLSLPLLMLMFVHLFNMHIPALFTNPWFQFILATPVQFIIGWQFYVGAYKNLRNGGANMDVLVAVGTSAAYFYSIYEMVRWLNGSTTQPHLYFETSAVLLTLILFGKYLEARAKSQTTNALGELLSLQAKEARILKDGNEVMIPLNEVHVGDTLIVKPGEKIPVDGKIIKGMTAIDESMLTGESIPVEKNVDDTVIGSTMNKNGTITMTATKVGGDTALANIIKVVEEAQSSKAPIQRLADIISGYFVPIVVGIALLIFIVWITLVTPGTFEPALVASISVLVIACPCALGLATPTSIMVGTGRAAENGILFKGGEFVERTHQIDTIVLDKTGTITNGRPVVTDYHGDNQTLQLLATAEKDSEHPLAEAIVNYAKEKQLTLTETTTFKAVPGHGIEATIDHHHILVGNRKLMADNDISLPKHISDDLTHYERDGKTAMLIAVNYSLTGIIAVADTVKDHAKDAIKQLHDMGIEVAMLTGDNKNTAQAIAKQVGIDTVIADILPEEKAAQIAKLQQQGKKVAMVGDGVNDAPALVKADIGIAIGTGTEVAIEAADITILGGDLMLIPKAIYASKATIRNIRQNLFWAFGYNIAGIPIAALGLLAPWVAGAAMALSSVSVVTNALRLKKMRLEPRRKDA</sequence>
<gene>
    <name type="primary">copA</name>
    <name type="ordered locus">SAV2557</name>
</gene>
<protein>
    <recommendedName>
        <fullName>Copper-exporting P-type ATPase</fullName>
        <ecNumber>7.2.2.8</ecNumber>
    </recommendedName>
    <alternativeName>
        <fullName>Copper-exporting P-type ATPase A</fullName>
    </alternativeName>
    <alternativeName>
        <fullName>Cu(+)-exporting ATPase</fullName>
    </alternativeName>
</protein>
<comment type="function">
    <text evidence="1">Involved in copper export.</text>
</comment>
<comment type="catalytic activity">
    <reaction>
        <text>Cu(+)(in) + ATP + H2O = Cu(+)(out) + ADP + phosphate + H(+)</text>
        <dbReference type="Rhea" id="RHEA:25792"/>
        <dbReference type="ChEBI" id="CHEBI:15377"/>
        <dbReference type="ChEBI" id="CHEBI:15378"/>
        <dbReference type="ChEBI" id="CHEBI:30616"/>
        <dbReference type="ChEBI" id="CHEBI:43474"/>
        <dbReference type="ChEBI" id="CHEBI:49552"/>
        <dbReference type="ChEBI" id="CHEBI:456216"/>
        <dbReference type="EC" id="7.2.2.8"/>
    </reaction>
</comment>
<comment type="subcellular location">
    <subcellularLocation>
        <location evidence="1">Cell membrane</location>
        <topology evidence="1">Multi-pass membrane protein</topology>
    </subcellularLocation>
</comment>
<comment type="similarity">
    <text evidence="4">Belongs to the cation transport ATPase (P-type) (TC 3.A.3) family. Type IB subfamily.</text>
</comment>
<evidence type="ECO:0000250" key="1"/>
<evidence type="ECO:0000255" key="2"/>
<evidence type="ECO:0000255" key="3">
    <source>
        <dbReference type="PROSITE-ProRule" id="PRU00280"/>
    </source>
</evidence>
<evidence type="ECO:0000305" key="4"/>
<proteinExistence type="inferred from homology"/>
<feature type="chain" id="PRO_0000350590" description="Copper-exporting P-type ATPase">
    <location>
        <begin position="1"/>
        <end position="802"/>
    </location>
</feature>
<feature type="transmembrane region" description="Helical" evidence="2">
    <location>
        <begin position="161"/>
        <end position="181"/>
    </location>
</feature>
<feature type="transmembrane region" description="Helical" evidence="2">
    <location>
        <begin position="192"/>
        <end position="212"/>
    </location>
</feature>
<feature type="transmembrane region" description="Helical" evidence="2">
    <location>
        <begin position="224"/>
        <end position="244"/>
    </location>
</feature>
<feature type="transmembrane region" description="Helical" evidence="2">
    <location>
        <begin position="256"/>
        <end position="276"/>
    </location>
</feature>
<feature type="transmembrane region" description="Helical" evidence="2">
    <location>
        <begin position="411"/>
        <end position="431"/>
    </location>
</feature>
<feature type="transmembrane region" description="Helical" evidence="2">
    <location>
        <begin position="438"/>
        <end position="458"/>
    </location>
</feature>
<feature type="transmembrane region" description="Helical" evidence="2">
    <location>
        <begin position="748"/>
        <end position="767"/>
    </location>
</feature>
<feature type="transmembrane region" description="Helical" evidence="2">
    <location>
        <begin position="771"/>
        <end position="790"/>
    </location>
</feature>
<feature type="domain" description="HMA 1" evidence="3">
    <location>
        <begin position="5"/>
        <end position="70"/>
    </location>
</feature>
<feature type="domain" description="HMA 2" evidence="3">
    <location>
        <begin position="72"/>
        <end position="138"/>
    </location>
</feature>
<feature type="active site" description="4-aspartylphosphate intermediate" evidence="1">
    <location>
        <position position="495"/>
    </location>
</feature>
<feature type="binding site" evidence="3">
    <location>
        <position position="16"/>
    </location>
    <ligand>
        <name>Cu(+)</name>
        <dbReference type="ChEBI" id="CHEBI:49552"/>
        <label>1</label>
    </ligand>
</feature>
<feature type="binding site" evidence="3">
    <location>
        <position position="19"/>
    </location>
    <ligand>
        <name>Cu(+)</name>
        <dbReference type="ChEBI" id="CHEBI:49552"/>
        <label>1</label>
    </ligand>
</feature>
<feature type="binding site" evidence="3">
    <location>
        <position position="83"/>
    </location>
    <ligand>
        <name>Cu(+)</name>
        <dbReference type="ChEBI" id="CHEBI:49552"/>
        <label>2</label>
    </ligand>
</feature>
<feature type="binding site" evidence="3">
    <location>
        <position position="86"/>
    </location>
    <ligand>
        <name>Cu(+)</name>
        <dbReference type="ChEBI" id="CHEBI:49552"/>
        <label>2</label>
    </ligand>
</feature>
<feature type="binding site">
    <location>
        <position position="690"/>
    </location>
    <ligand>
        <name>Mg(2+)</name>
        <dbReference type="ChEBI" id="CHEBI:18420"/>
    </ligand>
</feature>
<feature type="binding site">
    <location>
        <position position="694"/>
    </location>
    <ligand>
        <name>Mg(2+)</name>
        <dbReference type="ChEBI" id="CHEBI:18420"/>
    </ligand>
</feature>
<organism>
    <name type="scientific">Staphylococcus aureus (strain Mu50 / ATCC 700699)</name>
    <dbReference type="NCBI Taxonomy" id="158878"/>
    <lineage>
        <taxon>Bacteria</taxon>
        <taxon>Bacillati</taxon>
        <taxon>Bacillota</taxon>
        <taxon>Bacilli</taxon>
        <taxon>Bacillales</taxon>
        <taxon>Staphylococcaceae</taxon>
        <taxon>Staphylococcus</taxon>
    </lineage>
</organism>
<name>COPA_STAAM</name>